<reference key="1">
    <citation type="submission" date="2007-05" db="EMBL/GenBank/DDBJ databases">
        <title>Complete sequence of Pseudomonas putida F1.</title>
        <authorList>
            <consortium name="US DOE Joint Genome Institute"/>
            <person name="Copeland A."/>
            <person name="Lucas S."/>
            <person name="Lapidus A."/>
            <person name="Barry K."/>
            <person name="Detter J.C."/>
            <person name="Glavina del Rio T."/>
            <person name="Hammon N."/>
            <person name="Israni S."/>
            <person name="Dalin E."/>
            <person name="Tice H."/>
            <person name="Pitluck S."/>
            <person name="Chain P."/>
            <person name="Malfatti S."/>
            <person name="Shin M."/>
            <person name="Vergez L."/>
            <person name="Schmutz J."/>
            <person name="Larimer F."/>
            <person name="Land M."/>
            <person name="Hauser L."/>
            <person name="Kyrpides N."/>
            <person name="Lykidis A."/>
            <person name="Parales R."/>
            <person name="Richardson P."/>
        </authorList>
    </citation>
    <scope>NUCLEOTIDE SEQUENCE [LARGE SCALE GENOMIC DNA]</scope>
    <source>
        <strain>ATCC 700007 / DSM 6899 / JCM 31910 / BCRC 17059 / LMG 24140 / F1</strain>
    </source>
</reference>
<organism>
    <name type="scientific">Pseudomonas putida (strain ATCC 700007 / DSM 6899 / JCM 31910 / BCRC 17059 / LMG 24140 / F1)</name>
    <dbReference type="NCBI Taxonomy" id="351746"/>
    <lineage>
        <taxon>Bacteria</taxon>
        <taxon>Pseudomonadati</taxon>
        <taxon>Pseudomonadota</taxon>
        <taxon>Gammaproteobacteria</taxon>
        <taxon>Pseudomonadales</taxon>
        <taxon>Pseudomonadaceae</taxon>
        <taxon>Pseudomonas</taxon>
    </lineage>
</organism>
<comment type="similarity">
    <text evidence="1">Belongs to the universal ribosomal protein uL29 family.</text>
</comment>
<dbReference type="EMBL" id="CP000712">
    <property type="protein sequence ID" value="ABQ76665.1"/>
    <property type="molecule type" value="Genomic_DNA"/>
</dbReference>
<dbReference type="SMR" id="A5VXQ5"/>
<dbReference type="KEGG" id="ppf:Pput_0495"/>
<dbReference type="eggNOG" id="COG0255">
    <property type="taxonomic scope" value="Bacteria"/>
</dbReference>
<dbReference type="HOGENOM" id="CLU_158491_1_2_6"/>
<dbReference type="GO" id="GO:0022625">
    <property type="term" value="C:cytosolic large ribosomal subunit"/>
    <property type="evidence" value="ECO:0007669"/>
    <property type="project" value="TreeGrafter"/>
</dbReference>
<dbReference type="GO" id="GO:0003735">
    <property type="term" value="F:structural constituent of ribosome"/>
    <property type="evidence" value="ECO:0007669"/>
    <property type="project" value="InterPro"/>
</dbReference>
<dbReference type="GO" id="GO:0006412">
    <property type="term" value="P:translation"/>
    <property type="evidence" value="ECO:0007669"/>
    <property type="project" value="UniProtKB-UniRule"/>
</dbReference>
<dbReference type="CDD" id="cd00427">
    <property type="entry name" value="Ribosomal_L29_HIP"/>
    <property type="match status" value="1"/>
</dbReference>
<dbReference type="FunFam" id="1.10.287.310:FF:000001">
    <property type="entry name" value="50S ribosomal protein L29"/>
    <property type="match status" value="1"/>
</dbReference>
<dbReference type="Gene3D" id="1.10.287.310">
    <property type="match status" value="1"/>
</dbReference>
<dbReference type="HAMAP" id="MF_00374">
    <property type="entry name" value="Ribosomal_uL29"/>
    <property type="match status" value="1"/>
</dbReference>
<dbReference type="InterPro" id="IPR050063">
    <property type="entry name" value="Ribosomal_protein_uL29"/>
</dbReference>
<dbReference type="InterPro" id="IPR001854">
    <property type="entry name" value="Ribosomal_uL29"/>
</dbReference>
<dbReference type="InterPro" id="IPR018254">
    <property type="entry name" value="Ribosomal_uL29_CS"/>
</dbReference>
<dbReference type="InterPro" id="IPR036049">
    <property type="entry name" value="Ribosomal_uL29_sf"/>
</dbReference>
<dbReference type="NCBIfam" id="TIGR00012">
    <property type="entry name" value="L29"/>
    <property type="match status" value="1"/>
</dbReference>
<dbReference type="PANTHER" id="PTHR10916">
    <property type="entry name" value="60S RIBOSOMAL PROTEIN L35/50S RIBOSOMAL PROTEIN L29"/>
    <property type="match status" value="1"/>
</dbReference>
<dbReference type="PANTHER" id="PTHR10916:SF0">
    <property type="entry name" value="LARGE RIBOSOMAL SUBUNIT PROTEIN UL29C"/>
    <property type="match status" value="1"/>
</dbReference>
<dbReference type="Pfam" id="PF00831">
    <property type="entry name" value="Ribosomal_L29"/>
    <property type="match status" value="1"/>
</dbReference>
<dbReference type="SUPFAM" id="SSF46561">
    <property type="entry name" value="Ribosomal protein L29 (L29p)"/>
    <property type="match status" value="1"/>
</dbReference>
<dbReference type="PROSITE" id="PS00579">
    <property type="entry name" value="RIBOSOMAL_L29"/>
    <property type="match status" value="1"/>
</dbReference>
<evidence type="ECO:0000255" key="1">
    <source>
        <dbReference type="HAMAP-Rule" id="MF_00374"/>
    </source>
</evidence>
<evidence type="ECO:0000305" key="2"/>
<protein>
    <recommendedName>
        <fullName evidence="1">Large ribosomal subunit protein uL29</fullName>
    </recommendedName>
    <alternativeName>
        <fullName evidence="2">50S ribosomal protein L29</fullName>
    </alternativeName>
</protein>
<gene>
    <name evidence="1" type="primary">rpmC</name>
    <name type="ordered locus">Pput_0495</name>
</gene>
<name>RL29_PSEP1</name>
<proteinExistence type="inferred from homology"/>
<sequence length="63" mass="7172">MKANELREKSAQQLNEQLLGLLRDQFNLRMQKATGQLGQSHLLSQVKRDIARVKTVLNQQAGK</sequence>
<feature type="chain" id="PRO_1000007567" description="Large ribosomal subunit protein uL29">
    <location>
        <begin position="1"/>
        <end position="63"/>
    </location>
</feature>
<keyword id="KW-0687">Ribonucleoprotein</keyword>
<keyword id="KW-0689">Ribosomal protein</keyword>
<accession>A5VXQ5</accession>